<accession>A1STD0</accession>
<comment type="function">
    <text evidence="1">Activates KDO (a required 8-carbon sugar) for incorporation into bacterial lipopolysaccharide in Gram-negative bacteria.</text>
</comment>
<comment type="catalytic activity">
    <reaction evidence="1">
        <text>3-deoxy-alpha-D-manno-oct-2-ulosonate + CTP = CMP-3-deoxy-beta-D-manno-octulosonate + diphosphate</text>
        <dbReference type="Rhea" id="RHEA:23448"/>
        <dbReference type="ChEBI" id="CHEBI:33019"/>
        <dbReference type="ChEBI" id="CHEBI:37563"/>
        <dbReference type="ChEBI" id="CHEBI:85986"/>
        <dbReference type="ChEBI" id="CHEBI:85987"/>
        <dbReference type="EC" id="2.7.7.38"/>
    </reaction>
</comment>
<comment type="pathway">
    <text evidence="1">Nucleotide-sugar biosynthesis; CMP-3-deoxy-D-manno-octulosonate biosynthesis; CMP-3-deoxy-D-manno-octulosonate from 3-deoxy-D-manno-octulosonate and CTP: step 1/1.</text>
</comment>
<comment type="pathway">
    <text evidence="1">Bacterial outer membrane biogenesis; lipopolysaccharide biosynthesis.</text>
</comment>
<comment type="subcellular location">
    <subcellularLocation>
        <location evidence="1">Cytoplasm</location>
    </subcellularLocation>
</comment>
<comment type="similarity">
    <text evidence="1">Belongs to the KdsB family.</text>
</comment>
<gene>
    <name evidence="1" type="primary">kdsB</name>
    <name type="ordered locus">Ping_0903</name>
</gene>
<name>KDSB_PSYIN</name>
<sequence length="255" mass="28486">MSFIVVIPARYHSTRLPAKPLLDILGQTMIERVTNQALKSGAKQVIVATDDQRIVDALKHLNEIDVCMTSKDHQSGTDRLAEVCQQFKLADDEIIVNVQGDEPLIPPSVIIQVATNLQQNSAASVATLSAPIEDVADVFNTNAVKVVCDKNNMALYFSRATIPWNRDDFSVENQAEKSVDFTALQRHIGIYAYRASFLRQYATLSVSPLELLEKLEQLRVLWHGFKIHVEQANKIPPPGIDTQDDLQRVIDCLSH</sequence>
<keyword id="KW-0963">Cytoplasm</keyword>
<keyword id="KW-0448">Lipopolysaccharide biosynthesis</keyword>
<keyword id="KW-0548">Nucleotidyltransferase</keyword>
<keyword id="KW-1185">Reference proteome</keyword>
<keyword id="KW-0808">Transferase</keyword>
<organism>
    <name type="scientific">Psychromonas ingrahamii (strain DSM 17664 / CCUG 51855 / 37)</name>
    <dbReference type="NCBI Taxonomy" id="357804"/>
    <lineage>
        <taxon>Bacteria</taxon>
        <taxon>Pseudomonadati</taxon>
        <taxon>Pseudomonadota</taxon>
        <taxon>Gammaproteobacteria</taxon>
        <taxon>Alteromonadales</taxon>
        <taxon>Psychromonadaceae</taxon>
        <taxon>Psychromonas</taxon>
    </lineage>
</organism>
<protein>
    <recommendedName>
        <fullName evidence="1">3-deoxy-manno-octulosonate cytidylyltransferase</fullName>
        <ecNumber evidence="1">2.7.7.38</ecNumber>
    </recommendedName>
    <alternativeName>
        <fullName evidence="1">CMP-2-keto-3-deoxyoctulosonic acid synthase</fullName>
        <shortName evidence="1">CKS</shortName>
        <shortName evidence="1">CMP-KDO synthase</shortName>
    </alternativeName>
</protein>
<dbReference type="EC" id="2.7.7.38" evidence="1"/>
<dbReference type="EMBL" id="CP000510">
    <property type="protein sequence ID" value="ABM02745.1"/>
    <property type="molecule type" value="Genomic_DNA"/>
</dbReference>
<dbReference type="RefSeq" id="WP_011769308.1">
    <property type="nucleotide sequence ID" value="NC_008709.1"/>
</dbReference>
<dbReference type="SMR" id="A1STD0"/>
<dbReference type="STRING" id="357804.Ping_0903"/>
<dbReference type="KEGG" id="pin:Ping_0903"/>
<dbReference type="eggNOG" id="COG1212">
    <property type="taxonomic scope" value="Bacteria"/>
</dbReference>
<dbReference type="HOGENOM" id="CLU_065038_1_0_6"/>
<dbReference type="OrthoDB" id="9815559at2"/>
<dbReference type="UniPathway" id="UPA00030"/>
<dbReference type="UniPathway" id="UPA00358">
    <property type="reaction ID" value="UER00476"/>
</dbReference>
<dbReference type="Proteomes" id="UP000000639">
    <property type="component" value="Chromosome"/>
</dbReference>
<dbReference type="GO" id="GO:0005829">
    <property type="term" value="C:cytosol"/>
    <property type="evidence" value="ECO:0007669"/>
    <property type="project" value="TreeGrafter"/>
</dbReference>
<dbReference type="GO" id="GO:0008690">
    <property type="term" value="F:3-deoxy-manno-octulosonate cytidylyltransferase activity"/>
    <property type="evidence" value="ECO:0007669"/>
    <property type="project" value="UniProtKB-UniRule"/>
</dbReference>
<dbReference type="GO" id="GO:0033468">
    <property type="term" value="P:CMP-keto-3-deoxy-D-manno-octulosonic acid biosynthetic process"/>
    <property type="evidence" value="ECO:0007669"/>
    <property type="project" value="UniProtKB-UniRule"/>
</dbReference>
<dbReference type="GO" id="GO:0009103">
    <property type="term" value="P:lipopolysaccharide biosynthetic process"/>
    <property type="evidence" value="ECO:0007669"/>
    <property type="project" value="UniProtKB-UniRule"/>
</dbReference>
<dbReference type="CDD" id="cd02517">
    <property type="entry name" value="CMP-KDO-Synthetase"/>
    <property type="match status" value="1"/>
</dbReference>
<dbReference type="FunFam" id="3.90.550.10:FF:000011">
    <property type="entry name" value="3-deoxy-manno-octulosonate cytidylyltransferase"/>
    <property type="match status" value="1"/>
</dbReference>
<dbReference type="Gene3D" id="3.90.550.10">
    <property type="entry name" value="Spore Coat Polysaccharide Biosynthesis Protein SpsA, Chain A"/>
    <property type="match status" value="1"/>
</dbReference>
<dbReference type="HAMAP" id="MF_00057">
    <property type="entry name" value="KdsB"/>
    <property type="match status" value="1"/>
</dbReference>
<dbReference type="InterPro" id="IPR003329">
    <property type="entry name" value="Cytidylyl_trans"/>
</dbReference>
<dbReference type="InterPro" id="IPR004528">
    <property type="entry name" value="KdsB"/>
</dbReference>
<dbReference type="InterPro" id="IPR029044">
    <property type="entry name" value="Nucleotide-diphossugar_trans"/>
</dbReference>
<dbReference type="NCBIfam" id="TIGR00466">
    <property type="entry name" value="kdsB"/>
    <property type="match status" value="1"/>
</dbReference>
<dbReference type="NCBIfam" id="NF003950">
    <property type="entry name" value="PRK05450.1-3"/>
    <property type="match status" value="1"/>
</dbReference>
<dbReference type="NCBIfam" id="NF003952">
    <property type="entry name" value="PRK05450.1-5"/>
    <property type="match status" value="1"/>
</dbReference>
<dbReference type="NCBIfam" id="NF009905">
    <property type="entry name" value="PRK13368.1"/>
    <property type="match status" value="1"/>
</dbReference>
<dbReference type="PANTHER" id="PTHR42866">
    <property type="entry name" value="3-DEOXY-MANNO-OCTULOSONATE CYTIDYLYLTRANSFERASE"/>
    <property type="match status" value="1"/>
</dbReference>
<dbReference type="PANTHER" id="PTHR42866:SF2">
    <property type="entry name" value="3-DEOXY-MANNO-OCTULOSONATE CYTIDYLYLTRANSFERASE, MITOCHONDRIAL"/>
    <property type="match status" value="1"/>
</dbReference>
<dbReference type="Pfam" id="PF02348">
    <property type="entry name" value="CTP_transf_3"/>
    <property type="match status" value="1"/>
</dbReference>
<dbReference type="SUPFAM" id="SSF53448">
    <property type="entry name" value="Nucleotide-diphospho-sugar transferases"/>
    <property type="match status" value="1"/>
</dbReference>
<feature type="chain" id="PRO_1000091895" description="3-deoxy-manno-octulosonate cytidylyltransferase">
    <location>
        <begin position="1"/>
        <end position="255"/>
    </location>
</feature>
<evidence type="ECO:0000255" key="1">
    <source>
        <dbReference type="HAMAP-Rule" id="MF_00057"/>
    </source>
</evidence>
<proteinExistence type="inferred from homology"/>
<reference key="1">
    <citation type="journal article" date="2008" name="BMC Genomics">
        <title>Genomics of an extreme psychrophile, Psychromonas ingrahamii.</title>
        <authorList>
            <person name="Riley M."/>
            <person name="Staley J.T."/>
            <person name="Danchin A."/>
            <person name="Wang T.Z."/>
            <person name="Brettin T.S."/>
            <person name="Hauser L.J."/>
            <person name="Land M.L."/>
            <person name="Thompson L.S."/>
        </authorList>
    </citation>
    <scope>NUCLEOTIDE SEQUENCE [LARGE SCALE GENOMIC DNA]</scope>
    <source>
        <strain>DSM 17664 / CCUG 51855 / 37</strain>
    </source>
</reference>